<dbReference type="EMBL" id="L42023">
    <property type="protein sequence ID" value="AAC21971.1"/>
    <property type="molecule type" value="Genomic_DNA"/>
</dbReference>
<dbReference type="PIR" id="E64147">
    <property type="entry name" value="E64147"/>
</dbReference>
<dbReference type="RefSeq" id="NP_438473.1">
    <property type="nucleotide sequence ID" value="NC_000907.1"/>
</dbReference>
<dbReference type="SMR" id="P44628"/>
<dbReference type="STRING" id="71421.HI_0306"/>
<dbReference type="DNASU" id="949925"/>
<dbReference type="EnsemblBacteria" id="AAC21971">
    <property type="protein sequence ID" value="AAC21971"/>
    <property type="gene ID" value="HI_0306"/>
</dbReference>
<dbReference type="KEGG" id="hin:HI_0306"/>
<dbReference type="PATRIC" id="fig|71421.8.peg.323"/>
<dbReference type="eggNOG" id="COG2974">
    <property type="taxonomic scope" value="Bacteria"/>
</dbReference>
<dbReference type="HOGENOM" id="CLU_052038_1_1_6"/>
<dbReference type="OrthoDB" id="5290530at2"/>
<dbReference type="PhylomeDB" id="P44628"/>
<dbReference type="BioCyc" id="HINF71421:G1GJ1-324-MONOMER"/>
<dbReference type="Proteomes" id="UP000000579">
    <property type="component" value="Chromosome"/>
</dbReference>
<dbReference type="GO" id="GO:0043590">
    <property type="term" value="C:bacterial nucleoid"/>
    <property type="evidence" value="ECO:0000318"/>
    <property type="project" value="GO_Central"/>
</dbReference>
<dbReference type="GO" id="GO:0005737">
    <property type="term" value="C:cytoplasm"/>
    <property type="evidence" value="ECO:0007669"/>
    <property type="project" value="UniProtKB-UniRule"/>
</dbReference>
<dbReference type="GO" id="GO:0003690">
    <property type="term" value="F:double-stranded DNA binding"/>
    <property type="evidence" value="ECO:0000318"/>
    <property type="project" value="GO_Central"/>
</dbReference>
<dbReference type="GO" id="GO:0006310">
    <property type="term" value="P:DNA recombination"/>
    <property type="evidence" value="ECO:0007669"/>
    <property type="project" value="UniProtKB-UniRule"/>
</dbReference>
<dbReference type="GO" id="GO:0000018">
    <property type="term" value="P:regulation of DNA recombination"/>
    <property type="evidence" value="ECO:0000318"/>
    <property type="project" value="GO_Central"/>
</dbReference>
<dbReference type="HAMAP" id="MF_00194">
    <property type="entry name" value="RdgC"/>
    <property type="match status" value="1"/>
</dbReference>
<dbReference type="InterPro" id="IPR007476">
    <property type="entry name" value="RdgC"/>
</dbReference>
<dbReference type="NCBIfam" id="NF001462">
    <property type="entry name" value="PRK00321.1-3"/>
    <property type="match status" value="1"/>
</dbReference>
<dbReference type="NCBIfam" id="NF001464">
    <property type="entry name" value="PRK00321.1-5"/>
    <property type="match status" value="1"/>
</dbReference>
<dbReference type="PANTHER" id="PTHR38103">
    <property type="entry name" value="RECOMBINATION-ASSOCIATED PROTEIN RDGC"/>
    <property type="match status" value="1"/>
</dbReference>
<dbReference type="PANTHER" id="PTHR38103:SF1">
    <property type="entry name" value="RECOMBINATION-ASSOCIATED PROTEIN RDGC"/>
    <property type="match status" value="1"/>
</dbReference>
<dbReference type="Pfam" id="PF04381">
    <property type="entry name" value="RdgC"/>
    <property type="match status" value="1"/>
</dbReference>
<feature type="chain" id="PRO_0000211740" description="Recombination-associated protein RdgC">
    <location>
        <begin position="1"/>
        <end position="302"/>
    </location>
</feature>
<organism>
    <name type="scientific">Haemophilus influenzae (strain ATCC 51907 / DSM 11121 / KW20 / Rd)</name>
    <dbReference type="NCBI Taxonomy" id="71421"/>
    <lineage>
        <taxon>Bacteria</taxon>
        <taxon>Pseudomonadati</taxon>
        <taxon>Pseudomonadota</taxon>
        <taxon>Gammaproteobacteria</taxon>
        <taxon>Pasteurellales</taxon>
        <taxon>Pasteurellaceae</taxon>
        <taxon>Haemophilus</taxon>
    </lineage>
</organism>
<reference key="1">
    <citation type="journal article" date="1995" name="Science">
        <title>Whole-genome random sequencing and assembly of Haemophilus influenzae Rd.</title>
        <authorList>
            <person name="Fleischmann R.D."/>
            <person name="Adams M.D."/>
            <person name="White O."/>
            <person name="Clayton R.A."/>
            <person name="Kirkness E.F."/>
            <person name="Kerlavage A.R."/>
            <person name="Bult C.J."/>
            <person name="Tomb J.-F."/>
            <person name="Dougherty B.A."/>
            <person name="Merrick J.M."/>
            <person name="McKenney K."/>
            <person name="Sutton G.G."/>
            <person name="FitzHugh W."/>
            <person name="Fields C.A."/>
            <person name="Gocayne J.D."/>
            <person name="Scott J.D."/>
            <person name="Shirley R."/>
            <person name="Liu L.-I."/>
            <person name="Glodek A."/>
            <person name="Kelley J.M."/>
            <person name="Weidman J.F."/>
            <person name="Phillips C.A."/>
            <person name="Spriggs T."/>
            <person name="Hedblom E."/>
            <person name="Cotton M.D."/>
            <person name="Utterback T.R."/>
            <person name="Hanna M.C."/>
            <person name="Nguyen D.T."/>
            <person name="Saudek D.M."/>
            <person name="Brandon R.C."/>
            <person name="Fine L.D."/>
            <person name="Fritchman J.L."/>
            <person name="Fuhrmann J.L."/>
            <person name="Geoghagen N.S.M."/>
            <person name="Gnehm C.L."/>
            <person name="McDonald L.A."/>
            <person name="Small K.V."/>
            <person name="Fraser C.M."/>
            <person name="Smith H.O."/>
            <person name="Venter J.C."/>
        </authorList>
    </citation>
    <scope>NUCLEOTIDE SEQUENCE [LARGE SCALE GENOMIC DNA]</scope>
    <source>
        <strain>ATCC 51907 / DSM 11121 / KW20 / Rd</strain>
    </source>
</reference>
<reference key="2">
    <citation type="journal article" date="2000" name="Electrophoresis">
        <title>Two-dimensional map of the proteome of Haemophilus influenzae.</title>
        <authorList>
            <person name="Langen H."/>
            <person name="Takacs B."/>
            <person name="Evers S."/>
            <person name="Berndt P."/>
            <person name="Lahm H.W."/>
            <person name="Wipf B."/>
            <person name="Gray C."/>
            <person name="Fountoulakis M."/>
        </authorList>
    </citation>
    <scope>IDENTIFICATION BY MASS SPECTROMETRY</scope>
    <source>
        <strain>ATCC 51907 / DSM 11121 / KW20 / Rd</strain>
    </source>
</reference>
<protein>
    <recommendedName>
        <fullName>Recombination-associated protein RdgC</fullName>
    </recommendedName>
</protein>
<accession>P44628</accession>
<proteinExistence type="evidence at protein level"/>
<gene>
    <name type="primary">rdgC</name>
    <name type="ordered locus">HI_0306</name>
</gene>
<keyword id="KW-0963">Cytoplasm</keyword>
<keyword id="KW-0233">DNA recombination</keyword>
<keyword id="KW-1185">Reference proteome</keyword>
<sequence length="302" mass="34706">MWFKNLMTYRLTKPLDWDLAQLQTQLEDCQFHPCGTQDQSKFGWSAPLRGSDLLYFSVGKQILLIAKKEEKILPANVVKRELDDRIESLEQKENRKLKKVEKQTLKDDVVMNLLPRAFSKNQHTALWIDTENNLIHIDAASSKRAEDALALLRKSLGSLPVVPLAFANEPSTILTNWILQDNLPHWLLALEEAELRGSQEDSVIRCKKQPLENEEILALLQDGKKVVSKLALEWEDTLTFVFNEDCTIKRLKFADTVREKNDDILKEDFAQRFDADFVLMTGILAKLTENLLDEFGGEKARL</sequence>
<name>RDGC_HAEIN</name>
<comment type="function">
    <text evidence="1">May be involved in recombination.</text>
</comment>
<comment type="subcellular location">
    <subcellularLocation>
        <location evidence="1">Cytoplasm</location>
        <location evidence="1">Nucleoid</location>
    </subcellularLocation>
</comment>
<comment type="similarity">
    <text evidence="2">Belongs to the RdgC family.</text>
</comment>
<evidence type="ECO:0000250" key="1"/>
<evidence type="ECO:0000305" key="2"/>